<keyword id="KW-0963">Cytoplasm</keyword>
<keyword id="KW-0378">Hydrolase</keyword>
<keyword id="KW-0479">Metal-binding</keyword>
<keyword id="KW-0539">Nucleus</keyword>
<keyword id="KW-0597">Phosphoprotein</keyword>
<keyword id="KW-0645">Protease</keyword>
<keyword id="KW-1185">Reference proteome</keyword>
<keyword id="KW-0677">Repeat</keyword>
<keyword id="KW-0788">Thiol protease</keyword>
<keyword id="KW-0832">Ubl conjugation</keyword>
<keyword id="KW-0833">Ubl conjugation pathway</keyword>
<keyword id="KW-0862">Zinc</keyword>
<name>UBP4_RAT</name>
<organism>
    <name type="scientific">Rattus norvegicus</name>
    <name type="common">Rat</name>
    <dbReference type="NCBI Taxonomy" id="10116"/>
    <lineage>
        <taxon>Eukaryota</taxon>
        <taxon>Metazoa</taxon>
        <taxon>Chordata</taxon>
        <taxon>Craniata</taxon>
        <taxon>Vertebrata</taxon>
        <taxon>Euteleostomi</taxon>
        <taxon>Mammalia</taxon>
        <taxon>Eutheria</taxon>
        <taxon>Euarchontoglires</taxon>
        <taxon>Glires</taxon>
        <taxon>Rodentia</taxon>
        <taxon>Myomorpha</taxon>
        <taxon>Muroidea</taxon>
        <taxon>Muridae</taxon>
        <taxon>Murinae</taxon>
        <taxon>Rattus</taxon>
    </lineage>
</organism>
<proteinExistence type="evidence at protein level"/>
<feature type="chain" id="PRO_0000396806" description="Ubiquitin carboxyl-terminal hydrolase 4">
    <location>
        <begin position="1"/>
        <end position="961"/>
    </location>
</feature>
<feature type="domain" description="DUSP" evidence="4">
    <location>
        <begin position="11"/>
        <end position="122"/>
    </location>
</feature>
<feature type="domain" description="Ubiquitin-like 1" evidence="3">
    <location>
        <begin position="142"/>
        <end position="226"/>
    </location>
</feature>
<feature type="domain" description="USP" evidence="5">
    <location>
        <begin position="302"/>
        <end position="921"/>
    </location>
</feature>
<feature type="domain" description="Ubiquitin-like 2" evidence="3">
    <location>
        <begin position="483"/>
        <end position="571"/>
    </location>
</feature>
<feature type="region of interest" description="Necessary for interaction with SART3" evidence="2">
    <location>
        <begin position="27"/>
        <end position="216"/>
    </location>
</feature>
<feature type="region of interest" description="Disordered" evidence="6">
    <location>
        <begin position="219"/>
        <end position="257"/>
    </location>
</feature>
<feature type="region of interest" description="Required for USP4 activation by providing conformational flexibility between the DUSP and catalytic domains" evidence="2">
    <location>
        <begin position="229"/>
        <end position="295"/>
    </location>
</feature>
<feature type="region of interest" description="Regulates ubiquitin dissociation" evidence="2">
    <location>
        <begin position="384"/>
        <end position="386"/>
    </location>
</feature>
<feature type="region of interest" description="Necessary for interaction with RBL2" evidence="1">
    <location>
        <begin position="405"/>
        <end position="407"/>
    </location>
</feature>
<feature type="region of interest" description="Necessary for interaction with RB1 and RBL2" evidence="1">
    <location>
        <begin position="459"/>
        <end position="463"/>
    </location>
</feature>
<feature type="region of interest" description="Interacts with DUSP and ubiquitin-like 1 domains and is required for USP4 activation" evidence="2">
    <location>
        <begin position="485"/>
        <end position="773"/>
    </location>
</feature>
<feature type="region of interest" description="Disordered" evidence="6">
    <location>
        <begin position="641"/>
        <end position="700"/>
    </location>
</feature>
<feature type="region of interest" description="Disordered" evidence="6">
    <location>
        <begin position="924"/>
        <end position="961"/>
    </location>
</feature>
<feature type="short sequence motif" description="Nuclear export signal" evidence="1">
    <location>
        <begin position="133"/>
        <end position="141"/>
    </location>
</feature>
<feature type="short sequence motif" description="Nuclear localization signal" evidence="1">
    <location>
        <begin position="765"/>
        <end position="770"/>
    </location>
</feature>
<feature type="compositionally biased region" description="Polar residues" evidence="6">
    <location>
        <begin position="225"/>
        <end position="243"/>
    </location>
</feature>
<feature type="compositionally biased region" description="Low complexity" evidence="6">
    <location>
        <begin position="244"/>
        <end position="257"/>
    </location>
</feature>
<feature type="compositionally biased region" description="Acidic residues" evidence="6">
    <location>
        <begin position="950"/>
        <end position="961"/>
    </location>
</feature>
<feature type="active site" evidence="5">
    <location>
        <position position="311"/>
    </location>
</feature>
<feature type="active site" evidence="5">
    <location>
        <position position="879"/>
    </location>
</feature>
<feature type="binding site" evidence="2">
    <location>
        <position position="461"/>
    </location>
    <ligand>
        <name>Zn(2+)</name>
        <dbReference type="ChEBI" id="CHEBI:29105"/>
    </ligand>
</feature>
<feature type="binding site" evidence="2">
    <location>
        <position position="464"/>
    </location>
    <ligand>
        <name>Zn(2+)</name>
        <dbReference type="ChEBI" id="CHEBI:29105"/>
    </ligand>
</feature>
<feature type="binding site" evidence="2">
    <location>
        <position position="797"/>
    </location>
    <ligand>
        <name>Zn(2+)</name>
        <dbReference type="ChEBI" id="CHEBI:29105"/>
    </ligand>
</feature>
<feature type="binding site" evidence="2">
    <location>
        <position position="800"/>
    </location>
    <ligand>
        <name>Zn(2+)</name>
        <dbReference type="ChEBI" id="CHEBI:29105"/>
    </ligand>
</feature>
<feature type="modified residue" description="Phosphoserine" evidence="2">
    <location>
        <position position="445"/>
    </location>
</feature>
<feature type="modified residue" description="Phosphoserine" evidence="9">
    <location>
        <position position="655"/>
    </location>
</feature>
<feature type="modified residue" description="Phosphoserine" evidence="9">
    <location>
        <position position="674"/>
    </location>
</feature>
<feature type="modified residue" description="Phosphoserine" evidence="1">
    <location>
        <position position="679"/>
    </location>
</feature>
<comment type="function">
    <text evidence="2">Deubiquitinating enzyme that removes conjugated ubiquitin from target proteins. Deubiquitinates PDPK1. Deubiquitinates TRIM21. Deubiquitinates receptor ADORA2A which increases the amount of functional receptor at the cell surface. Deubiquitinates HAS2. Deubiquitinates RHEB in response to EGF signaling, promoting mTORC1 signaling. May regulate mRNA splicing through deubiquitination of the U4 spliceosomal protein PRPF3. This may prevent its recognition by the U5 component PRPF8 thereby destabilizing interactions within the U4/U6.U5 snRNP. May also play a role in the regulation of quality control in the ER.</text>
</comment>
<comment type="catalytic activity">
    <reaction evidence="2">
        <text>Thiol-dependent hydrolysis of ester, thioester, amide, peptide and isopeptide bonds formed by the C-terminal Gly of ubiquitin (a 76-residue protein attached to proteins as an intracellular targeting signal).</text>
        <dbReference type="EC" id="3.4.19.12"/>
    </reaction>
</comment>
<comment type="activity regulation">
    <text evidence="2">The completion of the deubiquitinase reaction is mediated by the DUSP and ubiquitin-like 1 domains which promotes the release of ubiquitin from the catalytic site enabling subsequent reactions to occur.</text>
</comment>
<comment type="subunit">
    <text evidence="1 2">Interacts with RB1 (both dephosphorylated and hypophosphorylated forms) (By similarity). Interacts with RBL1 and RBL2 (By similarity). Interacts with ADORA2A (via cytoplasmic C-terminus); the interaction is direct. Interacts with SART3; recruits USP4 to its substrate PRPF3 (By similarity).</text>
</comment>
<comment type="subcellular location">
    <subcellularLocation>
        <location evidence="1 2">Cytoplasm</location>
    </subcellularLocation>
    <subcellularLocation>
        <location evidence="1 2">Nucleus</location>
    </subcellularLocation>
    <text evidence="1 2">Shuttles between the nucleus and cytoplasm. Exported to the cytoplasm in a CRM1-dependent manner and recycled back to the nucleus via the importin alpha/beta heterodimeric import receptor. The relative amounts found in the nucleus and cytoplasm vary according to the cell type.</text>
</comment>
<comment type="tissue specificity">
    <text evidence="7">Expressed in hippocampus and striatum (at protein level).</text>
</comment>
<comment type="domain">
    <text evidence="2">The DUSP and ubiquitin-like 1 domains promote ubiquitin release and thus enhance USB4 catalytic activity. However, these domains do not bind ubiquitin.</text>
</comment>
<comment type="PTM">
    <text evidence="2">Phosphorylated at Ser-445 by PKB/AKT1 in response to EGF stimulus, promoting its ability deubiquitinate RHEB.</text>
</comment>
<comment type="PTM">
    <text evidence="2">Monoubiquitinated by TRIM21. Ubiquitination does not lead to its proteasomal degradation. Autodeubiquitinated.</text>
</comment>
<comment type="similarity">
    <text evidence="8">Belongs to the peptidase C19 family. USP4 subfamily.</text>
</comment>
<evidence type="ECO:0000250" key="1">
    <source>
        <dbReference type="UniProtKB" id="P35123"/>
    </source>
</evidence>
<evidence type="ECO:0000250" key="2">
    <source>
        <dbReference type="UniProtKB" id="Q13107"/>
    </source>
</evidence>
<evidence type="ECO:0000255" key="3"/>
<evidence type="ECO:0000255" key="4">
    <source>
        <dbReference type="PROSITE-ProRule" id="PRU00613"/>
    </source>
</evidence>
<evidence type="ECO:0000255" key="5">
    <source>
        <dbReference type="PROSITE-ProRule" id="PRU01035"/>
    </source>
</evidence>
<evidence type="ECO:0000256" key="6">
    <source>
        <dbReference type="SAM" id="MobiDB-lite"/>
    </source>
</evidence>
<evidence type="ECO:0000269" key="7">
    <source>
    </source>
</evidence>
<evidence type="ECO:0000305" key="8"/>
<evidence type="ECO:0007744" key="9">
    <source>
    </source>
</evidence>
<protein>
    <recommendedName>
        <fullName>Ubiquitin carboxyl-terminal hydrolase 4</fullName>
        <ecNumber evidence="2">3.4.19.12</ecNumber>
    </recommendedName>
    <alternativeName>
        <fullName>Deubiquitinating enzyme 4</fullName>
    </alternativeName>
    <alternativeName>
        <fullName>Ubiquitin thioesterase 4</fullName>
    </alternativeName>
    <alternativeName>
        <fullName>Ubiquitin-specific-processing protease 4</fullName>
    </alternativeName>
</protein>
<accession>B2GUZ1</accession>
<dbReference type="EC" id="3.4.19.12" evidence="2"/>
<dbReference type="EMBL" id="BC166460">
    <property type="protein sequence ID" value="AAI66460.1"/>
    <property type="molecule type" value="mRNA"/>
</dbReference>
<dbReference type="EMBL" id="CH473954">
    <property type="protein sequence ID" value="EDL77177.1"/>
    <property type="molecule type" value="Genomic_DNA"/>
</dbReference>
<dbReference type="RefSeq" id="NP_001128484.1">
    <property type="nucleotide sequence ID" value="NM_001135012.3"/>
</dbReference>
<dbReference type="SMR" id="B2GUZ1"/>
<dbReference type="BioGRID" id="253348">
    <property type="interactions" value="1"/>
</dbReference>
<dbReference type="FunCoup" id="B2GUZ1">
    <property type="interactions" value="3678"/>
</dbReference>
<dbReference type="IntAct" id="B2GUZ1">
    <property type="interactions" value="2"/>
</dbReference>
<dbReference type="STRING" id="10116.ENSRNOP00000071463"/>
<dbReference type="iPTMnet" id="B2GUZ1"/>
<dbReference type="PhosphoSitePlus" id="B2GUZ1"/>
<dbReference type="jPOST" id="B2GUZ1"/>
<dbReference type="PaxDb" id="10116-ENSRNOP00000066449"/>
<dbReference type="PeptideAtlas" id="B2GUZ1"/>
<dbReference type="Ensembl" id="ENSRNOT00000083046.2">
    <property type="protein sequence ID" value="ENSRNOP00000071463.1"/>
    <property type="gene ID" value="ENSRNOG00000054863.2"/>
</dbReference>
<dbReference type="GeneID" id="290864"/>
<dbReference type="KEGG" id="rno:290864"/>
<dbReference type="AGR" id="RGD:1587387"/>
<dbReference type="CTD" id="7375"/>
<dbReference type="RGD" id="1587387">
    <property type="gene designation" value="Usp4"/>
</dbReference>
<dbReference type="eggNOG" id="KOG1870">
    <property type="taxonomic scope" value="Eukaryota"/>
</dbReference>
<dbReference type="GeneTree" id="ENSGT00940000156645"/>
<dbReference type="InParanoid" id="B2GUZ1"/>
<dbReference type="OMA" id="KQQHSPN"/>
<dbReference type="OrthoDB" id="265776at2759"/>
<dbReference type="PhylomeDB" id="B2GUZ1"/>
<dbReference type="Reactome" id="R-RNO-5357786">
    <property type="pathway name" value="TNFR1-induced proapoptotic signaling"/>
</dbReference>
<dbReference type="Reactome" id="R-RNO-5357905">
    <property type="pathway name" value="Regulation of TNFR1 signaling"/>
</dbReference>
<dbReference type="Reactome" id="R-RNO-5357956">
    <property type="pathway name" value="TNFR1-induced NF-kappa-B signaling pathway"/>
</dbReference>
<dbReference type="Reactome" id="R-RNO-5689880">
    <property type="pathway name" value="Ub-specific processing proteases"/>
</dbReference>
<dbReference type="PRO" id="PR:B2GUZ1"/>
<dbReference type="Proteomes" id="UP000002494">
    <property type="component" value="Chromosome 8"/>
</dbReference>
<dbReference type="Proteomes" id="UP000234681">
    <property type="component" value="Chromosome 8"/>
</dbReference>
<dbReference type="Bgee" id="ENSRNOG00000054863">
    <property type="expression patterns" value="Expressed in skeletal muscle tissue and 19 other cell types or tissues"/>
</dbReference>
<dbReference type="ExpressionAtlas" id="B2GUZ1">
    <property type="expression patterns" value="baseline and differential"/>
</dbReference>
<dbReference type="GO" id="GO:0005737">
    <property type="term" value="C:cytoplasm"/>
    <property type="evidence" value="ECO:0000250"/>
    <property type="project" value="UniProtKB"/>
</dbReference>
<dbReference type="GO" id="GO:0005634">
    <property type="term" value="C:nucleus"/>
    <property type="evidence" value="ECO:0000250"/>
    <property type="project" value="UniProtKB"/>
</dbReference>
<dbReference type="GO" id="GO:0031685">
    <property type="term" value="F:adenosine receptor binding"/>
    <property type="evidence" value="ECO:0000266"/>
    <property type="project" value="RGD"/>
</dbReference>
<dbReference type="GO" id="GO:0004843">
    <property type="term" value="F:cysteine-type deubiquitinase activity"/>
    <property type="evidence" value="ECO:0000250"/>
    <property type="project" value="UniProtKB"/>
</dbReference>
<dbReference type="GO" id="GO:0042802">
    <property type="term" value="F:identical protein binding"/>
    <property type="evidence" value="ECO:0000266"/>
    <property type="project" value="RGD"/>
</dbReference>
<dbReference type="GO" id="GO:0046872">
    <property type="term" value="F:metal ion binding"/>
    <property type="evidence" value="ECO:0007669"/>
    <property type="project" value="UniProtKB-KW"/>
</dbReference>
<dbReference type="GO" id="GO:0031397">
    <property type="term" value="P:negative regulation of protein ubiquitination"/>
    <property type="evidence" value="ECO:0000250"/>
    <property type="project" value="UniProtKB"/>
</dbReference>
<dbReference type="GO" id="GO:1904263">
    <property type="term" value="P:positive regulation of TORC1 signaling"/>
    <property type="evidence" value="ECO:0000250"/>
    <property type="project" value="UniProtKB"/>
</dbReference>
<dbReference type="GO" id="GO:0016579">
    <property type="term" value="P:protein deubiquitination"/>
    <property type="evidence" value="ECO:0000250"/>
    <property type="project" value="UniProtKB"/>
</dbReference>
<dbReference type="GO" id="GO:0034394">
    <property type="term" value="P:protein localization to cell surface"/>
    <property type="evidence" value="ECO:0000250"/>
    <property type="project" value="UniProtKB"/>
</dbReference>
<dbReference type="GO" id="GO:0006508">
    <property type="term" value="P:proteolysis"/>
    <property type="evidence" value="ECO:0007669"/>
    <property type="project" value="UniProtKB-KW"/>
</dbReference>
<dbReference type="GO" id="GO:0031647">
    <property type="term" value="P:regulation of protein stability"/>
    <property type="evidence" value="ECO:0000250"/>
    <property type="project" value="UniProtKB"/>
</dbReference>
<dbReference type="GO" id="GO:0000244">
    <property type="term" value="P:spliceosomal tri-snRNP complex assembly"/>
    <property type="evidence" value="ECO:0000250"/>
    <property type="project" value="UniProtKB"/>
</dbReference>
<dbReference type="CDD" id="cd02674">
    <property type="entry name" value="Peptidase_C19R"/>
    <property type="match status" value="1"/>
</dbReference>
<dbReference type="FunFam" id="3.30.2230.10:FF:000003">
    <property type="entry name" value="ubiquitin carboxyl-terminal hydrolase 15 isoform X1"/>
    <property type="match status" value="1"/>
</dbReference>
<dbReference type="FunFam" id="3.90.70.10:FF:000013">
    <property type="entry name" value="ubiquitin carboxyl-terminal hydrolase 15 isoform X1"/>
    <property type="match status" value="1"/>
</dbReference>
<dbReference type="FunFam" id="3.10.20.90:FF:000020">
    <property type="entry name" value="ubiquitin carboxyl-terminal hydrolase 15 isoform X2"/>
    <property type="match status" value="1"/>
</dbReference>
<dbReference type="FunFam" id="3.90.70.10:FF:000047">
    <property type="entry name" value="ubiquitin carboxyl-terminal hydrolase 4 isoform X2"/>
    <property type="match status" value="1"/>
</dbReference>
<dbReference type="Gene3D" id="3.90.70.10">
    <property type="entry name" value="Cysteine proteinases"/>
    <property type="match status" value="2"/>
</dbReference>
<dbReference type="Gene3D" id="3.30.2230.10">
    <property type="entry name" value="DUSP-like"/>
    <property type="match status" value="1"/>
</dbReference>
<dbReference type="Gene3D" id="3.10.20.90">
    <property type="entry name" value="Phosphatidylinositol 3-kinase Catalytic Subunit, Chain A, domain 1"/>
    <property type="match status" value="1"/>
</dbReference>
<dbReference type="InterPro" id="IPR035927">
    <property type="entry name" value="DUSP-like_sf"/>
</dbReference>
<dbReference type="InterPro" id="IPR038765">
    <property type="entry name" value="Papain-like_cys_pep_sf"/>
</dbReference>
<dbReference type="InterPro" id="IPR006615">
    <property type="entry name" value="Pept_C19_DUSP"/>
</dbReference>
<dbReference type="InterPro" id="IPR001394">
    <property type="entry name" value="Peptidase_C19_UCH"/>
</dbReference>
<dbReference type="InterPro" id="IPR050185">
    <property type="entry name" value="Ub_carboxyl-term_hydrolase"/>
</dbReference>
<dbReference type="InterPro" id="IPR028135">
    <property type="entry name" value="Ub_USP-typ"/>
</dbReference>
<dbReference type="InterPro" id="IPR018200">
    <property type="entry name" value="USP_CS"/>
</dbReference>
<dbReference type="InterPro" id="IPR028889">
    <property type="entry name" value="USP_dom"/>
</dbReference>
<dbReference type="PANTHER" id="PTHR21646">
    <property type="entry name" value="UBIQUITIN CARBOXYL-TERMINAL HYDROLASE"/>
    <property type="match status" value="1"/>
</dbReference>
<dbReference type="PANTHER" id="PTHR21646:SF45">
    <property type="entry name" value="UBIQUITIN CARBOXYL-TERMINAL HYDROLASE 4"/>
    <property type="match status" value="1"/>
</dbReference>
<dbReference type="Pfam" id="PF06337">
    <property type="entry name" value="DUSP"/>
    <property type="match status" value="1"/>
</dbReference>
<dbReference type="Pfam" id="PF14836">
    <property type="entry name" value="Ubiquitin_3"/>
    <property type="match status" value="1"/>
</dbReference>
<dbReference type="Pfam" id="PF00443">
    <property type="entry name" value="UCH"/>
    <property type="match status" value="1"/>
</dbReference>
<dbReference type="SMART" id="SM00695">
    <property type="entry name" value="DUSP"/>
    <property type="match status" value="1"/>
</dbReference>
<dbReference type="SUPFAM" id="SSF54001">
    <property type="entry name" value="Cysteine proteinases"/>
    <property type="match status" value="1"/>
</dbReference>
<dbReference type="SUPFAM" id="SSF143791">
    <property type="entry name" value="DUSP-like"/>
    <property type="match status" value="1"/>
</dbReference>
<dbReference type="PROSITE" id="PS51283">
    <property type="entry name" value="DUSP"/>
    <property type="match status" value="1"/>
</dbReference>
<dbReference type="PROSITE" id="PS00972">
    <property type="entry name" value="USP_1"/>
    <property type="match status" value="1"/>
</dbReference>
<dbReference type="PROSITE" id="PS00973">
    <property type="entry name" value="USP_2"/>
    <property type="match status" value="1"/>
</dbReference>
<dbReference type="PROSITE" id="PS50235">
    <property type="entry name" value="USP_3"/>
    <property type="match status" value="1"/>
</dbReference>
<sequence length="961" mass="108373">MAEGRGTHERPDVETQKTELGALMGTTLQRGAQWYLIDSRWFKQWKKYVGFDSWDMYNVGEHNLFPGPIDNSGLFSDPESQTLKEHLIDELDYVLVPTEAWNKLLNWYGCVEGQQPIVRKVVEHGLFVKHCKVEVYLLELKLCENSDPTNVLSCHFSKADTIATIEKEMRKLFNIPAERETRLWNKYMSNTYEQLSKLDNTIQDAGLYQGQVLVIEPQNEDGTWPRQTLQSKSSTAPSRNFTTSSKPSASPYSSMSASLIANGDSTNSSGMHNSGVSRGGAGFSASYNCQEPPSPHIQPGLCGLGNLGNTCFMNSALQCLSNTGPLTEYFLKDEYEAEINRDNPLGMKGEIAEAYAELIKQMWSGRDTHVAPRMFKTQVGRFAPQFSGYQQQDSQELLAFILDGLHEDLNRVKKKPYLEPKDANGRPDAVVAKEAWENHRLRNDSVIVDTFHGLFKSTLVCPECAKVSVTFDPFCYLTLPLPLKKDRIMEVFLVPADPHCRPIQYRVTVPLMGAISDLCEALSKLSGIAAENMVVTDVYNHRFHKIFQMDEGLSHITPRDDIFVYEICTTPMDGSEYITLPVYFREKKSRPSSTSSGAVLYGQPLLVSVPKHRLTLESLYQAVCERISRYIKQPLPEEFLSSPLEPGACNGSRGSYEGDEEEMDHQEEGKEQLSEVEESGEDSQGGDPTETTQKAKGPPRHKRLFTFSLVNSCGTADINSLATDGKLLKLNSRSTLAIDWDSETRSLYFDEQESEACEKHTSMSQPQKKKKAAIALRECIELFTTMETLGEHDPWYCPTCKKHQQATKKFDLWSLPKILVVHLKRFSYNRYWRDKLDTVVEFPVRALNMSEFVCDRAARPYVYDLIAVSNHYGAMGVGHYTAYAKNRLNGKWYYFDDSSVSLASEDQIVTKAAYVLFYQRRDDECPSTSSPVSFPGSDGGAKLSSSQQDLGEEEAYTMDTN</sequence>
<reference key="1">
    <citation type="submission" date="2005-09" db="EMBL/GenBank/DDBJ databases">
        <authorList>
            <person name="Mural R.J."/>
            <person name="Adams M.D."/>
            <person name="Myers E.W."/>
            <person name="Smith H.O."/>
            <person name="Venter J.C."/>
        </authorList>
    </citation>
    <scope>NUCLEOTIDE SEQUENCE [LARGE SCALE GENOMIC DNA]</scope>
    <source>
        <strain>Brown Norway</strain>
    </source>
</reference>
<reference key="2">
    <citation type="journal article" date="2004" name="Genome Res.">
        <title>The status, quality, and expansion of the NIH full-length cDNA project: the Mammalian Gene Collection (MGC).</title>
        <authorList>
            <consortium name="The MGC Project Team"/>
        </authorList>
    </citation>
    <scope>NUCLEOTIDE SEQUENCE [LARGE SCALE MRNA]</scope>
    <source>
        <tissue>Lung</tissue>
    </source>
</reference>
<reference key="3">
    <citation type="journal article" date="2006" name="Mol. Pharmacol.">
        <title>The ubiquitin-specific protease Usp4 regulates the cell surface level of the A2A receptor.</title>
        <authorList>
            <person name="Milojevic T."/>
            <person name="Reiterer V."/>
            <person name="Stefan E."/>
            <person name="Korkhov V.M."/>
            <person name="Dorostkar M.M."/>
            <person name="Ducza E."/>
            <person name="Ogris E."/>
            <person name="Boehm S."/>
            <person name="Freissmuth M."/>
            <person name="Nanoff C."/>
        </authorList>
    </citation>
    <scope>TISSUE SPECIFICITY</scope>
</reference>
<reference key="4">
    <citation type="journal article" date="2012" name="Nat. Commun.">
        <title>Quantitative maps of protein phosphorylation sites across 14 different rat organs and tissues.</title>
        <authorList>
            <person name="Lundby A."/>
            <person name="Secher A."/>
            <person name="Lage K."/>
            <person name="Nordsborg N.B."/>
            <person name="Dmytriyev A."/>
            <person name="Lundby C."/>
            <person name="Olsen J.V."/>
        </authorList>
    </citation>
    <scope>PHOSPHORYLATION [LARGE SCALE ANALYSIS] AT SER-655 AND SER-674</scope>
    <scope>IDENTIFICATION BY MASS SPECTROMETRY [LARGE SCALE ANALYSIS]</scope>
</reference>
<gene>
    <name type="primary">Usp4</name>
</gene>